<organism>
    <name type="scientific">Colwellia psychrerythraea (strain 34H / ATCC BAA-681)</name>
    <name type="common">Vibrio psychroerythus</name>
    <dbReference type="NCBI Taxonomy" id="167879"/>
    <lineage>
        <taxon>Bacteria</taxon>
        <taxon>Pseudomonadati</taxon>
        <taxon>Pseudomonadota</taxon>
        <taxon>Gammaproteobacteria</taxon>
        <taxon>Alteromonadales</taxon>
        <taxon>Colwelliaceae</taxon>
        <taxon>Colwellia</taxon>
    </lineage>
</organism>
<feature type="chain" id="PRO_1000049429" description="Glycerol-3-phosphate acyltransferase">
    <location>
        <begin position="1"/>
        <end position="811"/>
    </location>
</feature>
<feature type="short sequence motif" description="HXXXXD motif">
    <location>
        <begin position="309"/>
        <end position="314"/>
    </location>
</feature>
<sequence>MLALRSFFYLLLKFPLKLLVRCKIITDSQNITDQPNQPIFYIVRHQSASDLLALQSACKKQNLPDPLGKVTINGESFNRTLCLAKSTPLCSWRKSSKTTATAQGLALLNQHVIDENIDAKLIPANLIWGRTPTKERKNLNIGTLLADQESPNWLRKFFIVLFLGRDTLVRFSEAFSLRNISDNHGSDEAAAHKFLRVARFHFHRQTIAAKGPRLMHRKQMFTALFANPSVKRIISDEAKNKKVSEAEIKKKALVMMNEIAGDYSVSWLRFGEIILHWLWKRLYSAIKVSNAKVLRKLAQDGHEIIYVPCHRSHMDYLLLSYVILQEGLVMPRIAAGINLNFWPAGTIFRKGGAFFIRRSFGGNRLYSTIFREYLGLLFERGYGVKYYTEGGRSRTGRVLAPKTGMLAMTIQSLLRGIDRPLTLVPVYLGYEHVMEVGTYHKELSGSEKKGESMFGVLKAIKSLRNYGNGYVNFGEPMNINEFLNKQVPDWKDSIDPIDPQKPSWLTPTVNVLADQVMENINKSAALNGVALIALILHASKNKALSKLELETQLDFFLNIQRQAPFSEQLTIPEETGAELLTHVISLNKVTITEDSFGSLVSLSETANTEMRYYRNNILHTYVVPALVCRLLDKHSKINQDELVIKVQNVTALLKEDLYLYQDSTHVEQQTLRVLTVLKEMEIAKQTKAGFWSLSDDVGLLSQVHAMAECIDESLQRLAIITSLTSRLAPLSKRDLETKVVAIAKRLSVLNNINAPEFIDKRAQSTLIATIREQGYIDLDDDGLLIASSTMAEIKATVINLVDIEVLQSIAR</sequence>
<name>PLSB_COLP3</name>
<reference key="1">
    <citation type="journal article" date="2005" name="Proc. Natl. Acad. Sci. U.S.A.">
        <title>The psychrophilic lifestyle as revealed by the genome sequence of Colwellia psychrerythraea 34H through genomic and proteomic analyses.</title>
        <authorList>
            <person name="Methe B.A."/>
            <person name="Nelson K.E."/>
            <person name="Deming J.W."/>
            <person name="Momen B."/>
            <person name="Melamud E."/>
            <person name="Zhang X."/>
            <person name="Moult J."/>
            <person name="Madupu R."/>
            <person name="Nelson W.C."/>
            <person name="Dodson R.J."/>
            <person name="Brinkac L.M."/>
            <person name="Daugherty S.C."/>
            <person name="Durkin A.S."/>
            <person name="DeBoy R.T."/>
            <person name="Kolonay J.F."/>
            <person name="Sullivan S.A."/>
            <person name="Zhou L."/>
            <person name="Davidsen T.M."/>
            <person name="Wu M."/>
            <person name="Huston A.L."/>
            <person name="Lewis M."/>
            <person name="Weaver B."/>
            <person name="Weidman J.F."/>
            <person name="Khouri H."/>
            <person name="Utterback T.R."/>
            <person name="Feldblyum T.V."/>
            <person name="Fraser C.M."/>
        </authorList>
    </citation>
    <scope>NUCLEOTIDE SEQUENCE [LARGE SCALE GENOMIC DNA]</scope>
    <source>
        <strain>34H / ATCC BAA-681</strain>
    </source>
</reference>
<gene>
    <name evidence="1" type="primary">plsB</name>
    <name type="ordered locus">CPS_0133</name>
</gene>
<dbReference type="EC" id="2.3.1.15" evidence="1"/>
<dbReference type="EMBL" id="CP000083">
    <property type="protein sequence ID" value="AAZ27641.1"/>
    <property type="molecule type" value="Genomic_DNA"/>
</dbReference>
<dbReference type="RefSeq" id="WP_011041008.1">
    <property type="nucleotide sequence ID" value="NC_003910.7"/>
</dbReference>
<dbReference type="SMR" id="Q48AL2"/>
<dbReference type="STRING" id="167879.CPS_0133"/>
<dbReference type="KEGG" id="cps:CPS_0133"/>
<dbReference type="eggNOG" id="COG2937">
    <property type="taxonomic scope" value="Bacteria"/>
</dbReference>
<dbReference type="HOGENOM" id="CLU_015407_0_0_6"/>
<dbReference type="UniPathway" id="UPA00557">
    <property type="reaction ID" value="UER00612"/>
</dbReference>
<dbReference type="Proteomes" id="UP000000547">
    <property type="component" value="Chromosome"/>
</dbReference>
<dbReference type="GO" id="GO:0005886">
    <property type="term" value="C:plasma membrane"/>
    <property type="evidence" value="ECO:0007669"/>
    <property type="project" value="UniProtKB-SubCell"/>
</dbReference>
<dbReference type="GO" id="GO:0004366">
    <property type="term" value="F:glycerol-3-phosphate O-acyltransferase activity"/>
    <property type="evidence" value="ECO:0007669"/>
    <property type="project" value="UniProtKB-UniRule"/>
</dbReference>
<dbReference type="GO" id="GO:0016024">
    <property type="term" value="P:CDP-diacylglycerol biosynthetic process"/>
    <property type="evidence" value="ECO:0007669"/>
    <property type="project" value="UniProtKB-UniRule"/>
</dbReference>
<dbReference type="GO" id="GO:0006631">
    <property type="term" value="P:fatty acid metabolic process"/>
    <property type="evidence" value="ECO:0007669"/>
    <property type="project" value="TreeGrafter"/>
</dbReference>
<dbReference type="CDD" id="cd07993">
    <property type="entry name" value="LPLAT_DHAPAT-like"/>
    <property type="match status" value="1"/>
</dbReference>
<dbReference type="HAMAP" id="MF_00393">
    <property type="entry name" value="Glyc3P_acyltrans"/>
    <property type="match status" value="1"/>
</dbReference>
<dbReference type="InterPro" id="IPR022284">
    <property type="entry name" value="GPAT/DHAPAT"/>
</dbReference>
<dbReference type="InterPro" id="IPR045520">
    <property type="entry name" value="GPAT/DHAPAT_C"/>
</dbReference>
<dbReference type="InterPro" id="IPR041728">
    <property type="entry name" value="GPAT/DHAPAT_LPLAT"/>
</dbReference>
<dbReference type="InterPro" id="IPR028354">
    <property type="entry name" value="GPAT_PlsB"/>
</dbReference>
<dbReference type="InterPro" id="IPR002123">
    <property type="entry name" value="Plipid/glycerol_acylTrfase"/>
</dbReference>
<dbReference type="NCBIfam" id="TIGR03703">
    <property type="entry name" value="plsB"/>
    <property type="match status" value="1"/>
</dbReference>
<dbReference type="NCBIfam" id="NF003441">
    <property type="entry name" value="PRK04974.1"/>
    <property type="match status" value="1"/>
</dbReference>
<dbReference type="PANTHER" id="PTHR12563:SF17">
    <property type="entry name" value="DIHYDROXYACETONE PHOSPHATE ACYLTRANSFERASE"/>
    <property type="match status" value="1"/>
</dbReference>
<dbReference type="PANTHER" id="PTHR12563">
    <property type="entry name" value="GLYCEROL-3-PHOSPHATE ACYLTRANSFERASE"/>
    <property type="match status" value="1"/>
</dbReference>
<dbReference type="Pfam" id="PF01553">
    <property type="entry name" value="Acyltransferase"/>
    <property type="match status" value="1"/>
</dbReference>
<dbReference type="Pfam" id="PF19277">
    <property type="entry name" value="GPAT_C"/>
    <property type="match status" value="1"/>
</dbReference>
<dbReference type="PIRSF" id="PIRSF500064">
    <property type="entry name" value="GPAT"/>
    <property type="match status" value="1"/>
</dbReference>
<dbReference type="PIRSF" id="PIRSF000437">
    <property type="entry name" value="GPAT_DHAPAT"/>
    <property type="match status" value="1"/>
</dbReference>
<dbReference type="SMART" id="SM00563">
    <property type="entry name" value="PlsC"/>
    <property type="match status" value="1"/>
</dbReference>
<dbReference type="SUPFAM" id="SSF69593">
    <property type="entry name" value="Glycerol-3-phosphate (1)-acyltransferase"/>
    <property type="match status" value="1"/>
</dbReference>
<evidence type="ECO:0000255" key="1">
    <source>
        <dbReference type="HAMAP-Rule" id="MF_00393"/>
    </source>
</evidence>
<protein>
    <recommendedName>
        <fullName evidence="1">Glycerol-3-phosphate acyltransferase</fullName>
        <shortName evidence="1">GPAT</shortName>
        <ecNumber evidence="1">2.3.1.15</ecNumber>
    </recommendedName>
</protein>
<accession>Q48AL2</accession>
<comment type="catalytic activity">
    <reaction evidence="1">
        <text>sn-glycerol 3-phosphate + an acyl-CoA = a 1-acyl-sn-glycero-3-phosphate + CoA</text>
        <dbReference type="Rhea" id="RHEA:15325"/>
        <dbReference type="ChEBI" id="CHEBI:57287"/>
        <dbReference type="ChEBI" id="CHEBI:57597"/>
        <dbReference type="ChEBI" id="CHEBI:57970"/>
        <dbReference type="ChEBI" id="CHEBI:58342"/>
        <dbReference type="EC" id="2.3.1.15"/>
    </reaction>
</comment>
<comment type="pathway">
    <text evidence="1">Phospholipid metabolism; CDP-diacylglycerol biosynthesis; CDP-diacylglycerol from sn-glycerol 3-phosphate: step 1/3.</text>
</comment>
<comment type="subcellular location">
    <subcellularLocation>
        <location evidence="1">Cell inner membrane</location>
        <topology evidence="1">Peripheral membrane protein</topology>
        <orientation evidence="1">Cytoplasmic side</orientation>
    </subcellularLocation>
</comment>
<comment type="domain">
    <text evidence="1">The HXXXXD motif is essential for acyltransferase activity and may constitute the binding site for the phosphate moiety of the glycerol-3-phosphate.</text>
</comment>
<comment type="similarity">
    <text evidence="1">Belongs to the GPAT/DAPAT family.</text>
</comment>
<proteinExistence type="inferred from homology"/>
<keyword id="KW-0012">Acyltransferase</keyword>
<keyword id="KW-0997">Cell inner membrane</keyword>
<keyword id="KW-1003">Cell membrane</keyword>
<keyword id="KW-0444">Lipid biosynthesis</keyword>
<keyword id="KW-0443">Lipid metabolism</keyword>
<keyword id="KW-0472">Membrane</keyword>
<keyword id="KW-0594">Phospholipid biosynthesis</keyword>
<keyword id="KW-1208">Phospholipid metabolism</keyword>
<keyword id="KW-0808">Transferase</keyword>